<name>HUTI_STRGN</name>
<sequence>GILSTVRATREASFENLYDKSKKLLDYMLLHGVTTVEAKSGYGLDWETEKRQLDVVGALDRDHDIDLVSTFMAAHAVPPEYKGRSQEYLELIVEEMLPRVKAENLAEFCDIFCEKGVFTADESRYLLSKAKEMGFKLRIHADEMESIGGVDVAAELGATSAEHLMMATDEGIRKMAEAKVIGNLLPATTFSLMEDTYAPARKMLEAGMAITLTTDSNPGSCPTANLQFVMQLGCFMCALTPVEVLNAVTINAAYSVNRQDKIGSFDTGKQADITILDAKNIDYPLYFFATNLTHQVYKAGKLVVDQGRIV</sequence>
<keyword id="KW-0963">Cytoplasm</keyword>
<keyword id="KW-0369">Histidine metabolism</keyword>
<keyword id="KW-0378">Hydrolase</keyword>
<keyword id="KW-0408">Iron</keyword>
<keyword id="KW-0479">Metal-binding</keyword>
<keyword id="KW-0862">Zinc</keyword>
<comment type="function">
    <text evidence="3">Catalyzes the hydrolytic cleavage of the carbon-nitrogen bond in imidazolone-5-propanoate to yield N-formimidoyl-L-glutamate. It is the third step in the universal histidine degradation pathway.</text>
</comment>
<comment type="catalytic activity">
    <reaction>
        <text>4-imidazolone-5-propanoate + H2O = N-formimidoyl-L-glutamate</text>
        <dbReference type="Rhea" id="RHEA:23660"/>
        <dbReference type="ChEBI" id="CHEBI:15377"/>
        <dbReference type="ChEBI" id="CHEBI:58928"/>
        <dbReference type="ChEBI" id="CHEBI:77893"/>
        <dbReference type="EC" id="3.5.2.7"/>
    </reaction>
</comment>
<comment type="cofactor">
    <cofactor evidence="3">
        <name>Zn(2+)</name>
        <dbReference type="ChEBI" id="CHEBI:29105"/>
    </cofactor>
    <cofactor evidence="2">
        <name>Fe(3+)</name>
        <dbReference type="ChEBI" id="CHEBI:29034"/>
    </cofactor>
    <text evidence="1">Binds 1 zinc or iron ion per subunit.</text>
</comment>
<comment type="pathway">
    <text>Amino-acid degradation; L-histidine degradation into L-glutamate; N-formimidoyl-L-glutamate from L-histidine: step 3/3.</text>
</comment>
<comment type="subcellular location">
    <subcellularLocation>
        <location evidence="5">Cytoplasm</location>
    </subcellularLocation>
</comment>
<comment type="similarity">
    <text evidence="5">Belongs to the metallo-dependent hydrolases superfamily. HutI family.</text>
</comment>
<comment type="sequence caution" evidence="5">
    <conflict type="frameshift">
        <sequence resource="EMBL" id="L11577"/>
    </conflict>
</comment>
<feature type="chain" id="PRO_0000160965" description="Imidazolonepropionase">
    <location>
        <begin position="1" status="less than"/>
        <end position="310"/>
    </location>
</feature>
<feature type="binding site" evidence="3">
    <location>
        <position position="42"/>
    </location>
    <ligand>
        <name>4-imidazolone-5-propanoate</name>
        <dbReference type="ChEBI" id="CHEBI:77893"/>
    </ligand>
</feature>
<feature type="binding site" evidence="4">
    <location>
        <position position="42"/>
    </location>
    <ligand>
        <name>N-formimidoyl-L-glutamate</name>
        <dbReference type="ChEBI" id="CHEBI:58928"/>
    </ligand>
</feature>
<feature type="binding site" evidence="3">
    <location>
        <position position="75"/>
    </location>
    <ligand>
        <name>4-imidazolone-5-propanoate</name>
        <dbReference type="ChEBI" id="CHEBI:77893"/>
    </ligand>
</feature>
<feature type="binding site" evidence="2">
    <location>
        <position position="140"/>
    </location>
    <ligand>
        <name>Fe(3+)</name>
        <dbReference type="ChEBI" id="CHEBI:29034"/>
    </ligand>
</feature>
<feature type="binding site" evidence="3">
    <location>
        <position position="140"/>
    </location>
    <ligand>
        <name>Zn(2+)</name>
        <dbReference type="ChEBI" id="CHEBI:29105"/>
    </ligand>
</feature>
<feature type="binding site" evidence="3">
    <location>
        <position position="143"/>
    </location>
    <ligand>
        <name>4-imidazolone-5-propanoate</name>
        <dbReference type="ChEBI" id="CHEBI:77893"/>
    </ligand>
</feature>
<feature type="binding site" evidence="2">
    <location>
        <position position="215"/>
    </location>
    <ligand>
        <name>Fe(3+)</name>
        <dbReference type="ChEBI" id="CHEBI:29034"/>
    </ligand>
</feature>
<feature type="binding site" evidence="3">
    <location>
        <position position="215"/>
    </location>
    <ligand>
        <name>Zn(2+)</name>
        <dbReference type="ChEBI" id="CHEBI:29105"/>
    </ligand>
</feature>
<feature type="binding site" evidence="4">
    <location>
        <position position="217"/>
    </location>
    <ligand>
        <name>N-formimidoyl-L-glutamate</name>
        <dbReference type="ChEBI" id="CHEBI:58928"/>
    </ligand>
</feature>
<feature type="binding site" evidence="4">
    <location>
        <position position="219"/>
    </location>
    <ligand>
        <name>N-formimidoyl-L-glutamate</name>
        <dbReference type="ChEBI" id="CHEBI:58928"/>
    </ligand>
</feature>
<feature type="binding site" evidence="2">
    <location>
        <position position="220"/>
    </location>
    <ligand>
        <name>4-imidazolone-5-propanoate</name>
        <dbReference type="ChEBI" id="CHEBI:77893"/>
    </ligand>
</feature>
<feature type="non-terminal residue">
    <location>
        <position position="1"/>
    </location>
</feature>
<protein>
    <recommendedName>
        <fullName>Imidazolonepropionase</fullName>
        <ecNumber>3.5.2.7</ecNumber>
    </recommendedName>
    <alternativeName>
        <fullName>Imidazolone-5-propionate hydrolase</fullName>
    </alternativeName>
</protein>
<organism>
    <name type="scientific">Streptococcus gordonii</name>
    <dbReference type="NCBI Taxonomy" id="1302"/>
    <lineage>
        <taxon>Bacteria</taxon>
        <taxon>Bacillati</taxon>
        <taxon>Bacillota</taxon>
        <taxon>Bacilli</taxon>
        <taxon>Lactobacillales</taxon>
        <taxon>Streptococcaceae</taxon>
        <taxon>Streptococcus</taxon>
    </lineage>
</organism>
<gene>
    <name type="primary">hutI</name>
</gene>
<accession>P42358</accession>
<dbReference type="EC" id="3.5.2.7"/>
<dbReference type="EMBL" id="L11577">
    <property type="status" value="NOT_ANNOTATED_CDS"/>
    <property type="molecule type" value="Genomic_DNA"/>
</dbReference>
<dbReference type="SMR" id="P42358"/>
<dbReference type="UniPathway" id="UPA00379">
    <property type="reaction ID" value="UER00551"/>
</dbReference>
<dbReference type="GO" id="GO:0005737">
    <property type="term" value="C:cytoplasm"/>
    <property type="evidence" value="ECO:0007669"/>
    <property type="project" value="UniProtKB-SubCell"/>
</dbReference>
<dbReference type="GO" id="GO:0050480">
    <property type="term" value="F:imidazolonepropionase activity"/>
    <property type="evidence" value="ECO:0007669"/>
    <property type="project" value="UniProtKB-EC"/>
</dbReference>
<dbReference type="GO" id="GO:0046872">
    <property type="term" value="F:metal ion binding"/>
    <property type="evidence" value="ECO:0007669"/>
    <property type="project" value="UniProtKB-KW"/>
</dbReference>
<dbReference type="GO" id="GO:0019556">
    <property type="term" value="P:L-histidine catabolic process to glutamate and formamide"/>
    <property type="evidence" value="ECO:0007669"/>
    <property type="project" value="UniProtKB-UniPathway"/>
</dbReference>
<dbReference type="GO" id="GO:0019557">
    <property type="term" value="P:L-histidine catabolic process to glutamate and formate"/>
    <property type="evidence" value="ECO:0007669"/>
    <property type="project" value="UniProtKB-UniPathway"/>
</dbReference>
<dbReference type="Gene3D" id="3.20.20.140">
    <property type="entry name" value="Metal-dependent hydrolases"/>
    <property type="match status" value="1"/>
</dbReference>
<dbReference type="Gene3D" id="2.30.40.10">
    <property type="entry name" value="Urease, subunit C, domain 1"/>
    <property type="match status" value="1"/>
</dbReference>
<dbReference type="InterPro" id="IPR006680">
    <property type="entry name" value="Amidohydro-rel"/>
</dbReference>
<dbReference type="InterPro" id="IPR005920">
    <property type="entry name" value="HutI"/>
</dbReference>
<dbReference type="InterPro" id="IPR011059">
    <property type="entry name" value="Metal-dep_hydrolase_composite"/>
</dbReference>
<dbReference type="InterPro" id="IPR032466">
    <property type="entry name" value="Metal_Hydrolase"/>
</dbReference>
<dbReference type="NCBIfam" id="TIGR01224">
    <property type="entry name" value="hutI"/>
    <property type="match status" value="1"/>
</dbReference>
<dbReference type="PANTHER" id="PTHR42752">
    <property type="entry name" value="IMIDAZOLONEPROPIONASE"/>
    <property type="match status" value="1"/>
</dbReference>
<dbReference type="PANTHER" id="PTHR42752:SF1">
    <property type="entry name" value="IMIDAZOLONEPROPIONASE-RELATED"/>
    <property type="match status" value="1"/>
</dbReference>
<dbReference type="Pfam" id="PF01979">
    <property type="entry name" value="Amidohydro_1"/>
    <property type="match status" value="1"/>
</dbReference>
<dbReference type="SUPFAM" id="SSF51338">
    <property type="entry name" value="Composite domain of metallo-dependent hydrolases"/>
    <property type="match status" value="1"/>
</dbReference>
<dbReference type="SUPFAM" id="SSF51556">
    <property type="entry name" value="Metallo-dependent hydrolases"/>
    <property type="match status" value="1"/>
</dbReference>
<proteinExistence type="inferred from homology"/>
<evidence type="ECO:0000250" key="1"/>
<evidence type="ECO:0000250" key="2">
    <source>
        <dbReference type="UniProtKB" id="A0KF84"/>
    </source>
</evidence>
<evidence type="ECO:0000250" key="3">
    <source>
        <dbReference type="UniProtKB" id="P42084"/>
    </source>
</evidence>
<evidence type="ECO:0000250" key="4">
    <source>
        <dbReference type="UniProtKB" id="Q8U8Z6"/>
    </source>
</evidence>
<evidence type="ECO:0000305" key="5"/>
<reference key="1">
    <citation type="journal article" date="1994" name="Infect. Immun.">
        <title>Nucleotide sequence of the Streptococcus gordonii PK488 coaggregation adhesin gene, scaA, and ATP-binding cassette.</title>
        <authorList>
            <person name="Kolenbrander P.E."/>
            <person name="Andersen R.N."/>
            <person name="Ganeshkumar N."/>
        </authorList>
    </citation>
    <scope>NUCLEOTIDE SEQUENCE [GENOMIC DNA]</scope>
    <source>
        <strain>ATCC 51656 / PK488</strain>
    </source>
</reference>